<proteinExistence type="evidence at transcript level"/>
<comment type="function">
    <text evidence="1 2">Structure-specific nuclease with 5'-flap endonuclease and 5'-3' exonuclease activities involved in DNA replication and repair. During DNA replication, cleaves the 5'-overhanging flap structure that is generated by displacement synthesis when DNA polymerase encounters the 5'-end of a downstream Okazaki fragment. It enters the flap from the 5'-end and then tracks to cleave the flap base, leaving a nick for ligation. Also involved in the long patch base excision repair (LP-BER) pathway, by cleaving within the apurinic/apyrimidinic (AP) site-terminated flap. Acts as a genome stabilization factor that prevents flaps from equilibrating into structures that lead to duplications and deletions. Also possesses 5'-3' exonuclease activity on nicked or gapped double-stranded DNA, and exhibits RNase H activity. Also involved in replication and repair of rDNA and in repairing mitochondrial DNA (By similarity). May be required for cell proliferation.</text>
</comment>
<comment type="cofactor">
    <cofactor evidence="1">
        <name>Mg(2+)</name>
        <dbReference type="ChEBI" id="CHEBI:18420"/>
    </cofactor>
    <text evidence="1">Binds 2 magnesium ions per subunit. They probably participate in the reaction catalyzed by the enzyme. May bind an additional third magnesium ion after substrate binding.</text>
</comment>
<comment type="subunit">
    <text evidence="1">Interacts with PCNA. Three molecules of FEN1 bind to one PCNA trimer with each molecule binding to one PCNA monomer. PCNA stimulates the nuclease activity without altering cleavage specificity.</text>
</comment>
<comment type="subcellular location">
    <subcellularLocation>
        <location evidence="1">Nucleus</location>
        <location evidence="1">Nucleolus</location>
    </subcellularLocation>
    <subcellularLocation>
        <location evidence="1">Nucleus</location>
        <location evidence="1">Nucleoplasm</location>
    </subcellularLocation>
    <subcellularLocation>
        <location evidence="1">Mitochondrion</location>
    </subcellularLocation>
    <text evidence="1">Resides mostly in the nucleoli and relocalizes to the nucleoplasm upon DNA damage.</text>
</comment>
<comment type="tissue specificity">
    <text evidence="2">Expressed in proliferating tissues: shoot apical meristem, young leaves, panicles and roots.</text>
</comment>
<comment type="PTM">
    <text evidence="1">Phosphorylated. Phosphorylation upon DNA damage induces relocalization to the nuclear plasma.</text>
</comment>
<comment type="similarity">
    <text evidence="1">Belongs to the XPG/RAD2 endonuclease family. FEN1 subfamily.</text>
</comment>
<gene>
    <name evidence="3" type="primary">FEN1B</name>
    <name type="ordered locus">Os03g0834000</name>
    <name type="ordered locus">LOC_Os03g61820</name>
    <name type="ORF">OsJ_13256</name>
    <name type="ORF">OSJNBa0096I06.25</name>
</gene>
<accession>Q75LI2</accession>
<accession>A0A0P0W554</accession>
<accession>Q10B10</accession>
<accession>Q84UJ7</accession>
<evidence type="ECO:0000255" key="1">
    <source>
        <dbReference type="HAMAP-Rule" id="MF_03140"/>
    </source>
</evidence>
<evidence type="ECO:0000269" key="2">
    <source>
    </source>
</evidence>
<evidence type="ECO:0000305" key="3"/>
<dbReference type="EC" id="3.1.-.-" evidence="1"/>
<dbReference type="EMBL" id="AB080084">
    <property type="protein sequence ID" value="BAC66965.1"/>
    <property type="molecule type" value="mRNA"/>
</dbReference>
<dbReference type="EMBL" id="AB088391">
    <property type="protein sequence ID" value="BAC98428.1"/>
    <property type="molecule type" value="mRNA"/>
</dbReference>
<dbReference type="EMBL" id="AC092557">
    <property type="protein sequence ID" value="AAR88582.1"/>
    <property type="molecule type" value="Genomic_DNA"/>
</dbReference>
<dbReference type="EMBL" id="DP000009">
    <property type="protein sequence ID" value="ABF99737.1"/>
    <property type="molecule type" value="Genomic_DNA"/>
</dbReference>
<dbReference type="EMBL" id="AP008209">
    <property type="protein sequence ID" value="BAF13728.1"/>
    <property type="molecule type" value="Genomic_DNA"/>
</dbReference>
<dbReference type="EMBL" id="AP014959">
    <property type="protein sequence ID" value="BAS87235.1"/>
    <property type="molecule type" value="Genomic_DNA"/>
</dbReference>
<dbReference type="EMBL" id="CM000140">
    <property type="protein sequence ID" value="EEE60249.1"/>
    <property type="molecule type" value="Genomic_DNA"/>
</dbReference>
<dbReference type="EMBL" id="AK062149">
    <property type="protein sequence ID" value="BAG88230.1"/>
    <property type="molecule type" value="mRNA"/>
</dbReference>
<dbReference type="RefSeq" id="NP_001389247.1">
    <property type="nucleotide sequence ID" value="NM_001402318.1"/>
</dbReference>
<dbReference type="RefSeq" id="XP_015632894.1">
    <property type="nucleotide sequence ID" value="XM_015777408.1"/>
</dbReference>
<dbReference type="SMR" id="Q75LI2"/>
<dbReference type="FunCoup" id="Q75LI2">
    <property type="interactions" value="2153"/>
</dbReference>
<dbReference type="STRING" id="39947.Q75LI2"/>
<dbReference type="PaxDb" id="39947-Q75LI2"/>
<dbReference type="EnsemblPlants" id="Os03t0834000-01">
    <property type="protein sequence ID" value="Os03t0834000-01"/>
    <property type="gene ID" value="Os03g0834000"/>
</dbReference>
<dbReference type="GeneID" id="4334691"/>
<dbReference type="Gramene" id="Os03t0834000-01">
    <property type="protein sequence ID" value="Os03t0834000-01"/>
    <property type="gene ID" value="Os03g0834000"/>
</dbReference>
<dbReference type="KEGG" id="dosa:Os03g0834000"/>
<dbReference type="eggNOG" id="KOG2519">
    <property type="taxonomic scope" value="Eukaryota"/>
</dbReference>
<dbReference type="HOGENOM" id="CLU_032444_2_0_1"/>
<dbReference type="InParanoid" id="Q75LI2"/>
<dbReference type="OMA" id="IQEVHID"/>
<dbReference type="OrthoDB" id="1937206at2759"/>
<dbReference type="Proteomes" id="UP000000763">
    <property type="component" value="Chromosome 3"/>
</dbReference>
<dbReference type="Proteomes" id="UP000007752">
    <property type="component" value="Chromosome 3"/>
</dbReference>
<dbReference type="Proteomes" id="UP000059680">
    <property type="component" value="Chromosome 3"/>
</dbReference>
<dbReference type="ExpressionAtlas" id="Q75LI2">
    <property type="expression patterns" value="baseline and differential"/>
</dbReference>
<dbReference type="GO" id="GO:0005739">
    <property type="term" value="C:mitochondrion"/>
    <property type="evidence" value="ECO:0007669"/>
    <property type="project" value="UniProtKB-SubCell"/>
</dbReference>
<dbReference type="GO" id="GO:0005730">
    <property type="term" value="C:nucleolus"/>
    <property type="evidence" value="ECO:0007669"/>
    <property type="project" value="UniProtKB-SubCell"/>
</dbReference>
<dbReference type="GO" id="GO:0005654">
    <property type="term" value="C:nucleoplasm"/>
    <property type="evidence" value="ECO:0007669"/>
    <property type="project" value="UniProtKB-SubCell"/>
</dbReference>
<dbReference type="GO" id="GO:0008409">
    <property type="term" value="F:5'-3' exonuclease activity"/>
    <property type="evidence" value="ECO:0000318"/>
    <property type="project" value="GO_Central"/>
</dbReference>
<dbReference type="GO" id="GO:0017108">
    <property type="term" value="F:5'-flap endonuclease activity"/>
    <property type="evidence" value="ECO:0000318"/>
    <property type="project" value="GO_Central"/>
</dbReference>
<dbReference type="GO" id="GO:0003677">
    <property type="term" value="F:DNA binding"/>
    <property type="evidence" value="ECO:0007669"/>
    <property type="project" value="UniProtKB-UniRule"/>
</dbReference>
<dbReference type="GO" id="GO:0000287">
    <property type="term" value="F:magnesium ion binding"/>
    <property type="evidence" value="ECO:0007669"/>
    <property type="project" value="UniProtKB-UniRule"/>
</dbReference>
<dbReference type="GO" id="GO:0006284">
    <property type="term" value="P:base-excision repair"/>
    <property type="evidence" value="ECO:0007669"/>
    <property type="project" value="UniProtKB-UniRule"/>
</dbReference>
<dbReference type="GO" id="GO:0043137">
    <property type="term" value="P:DNA replication, removal of RNA primer"/>
    <property type="evidence" value="ECO:0007669"/>
    <property type="project" value="UniProtKB-UniRule"/>
</dbReference>
<dbReference type="CDD" id="cd09907">
    <property type="entry name" value="H3TH_FEN1-Euk"/>
    <property type="match status" value="1"/>
</dbReference>
<dbReference type="CDD" id="cd09867">
    <property type="entry name" value="PIN_FEN1"/>
    <property type="match status" value="1"/>
</dbReference>
<dbReference type="FunFam" id="1.10.150.20:FF:000009">
    <property type="entry name" value="Flap endonuclease 1"/>
    <property type="match status" value="1"/>
</dbReference>
<dbReference type="FunFam" id="3.40.50.1010:FF:000015">
    <property type="entry name" value="Flap endonuclease 1"/>
    <property type="match status" value="1"/>
</dbReference>
<dbReference type="Gene3D" id="1.10.150.20">
    <property type="entry name" value="5' to 3' exonuclease, C-terminal subdomain"/>
    <property type="match status" value="1"/>
</dbReference>
<dbReference type="Gene3D" id="3.40.50.1010">
    <property type="entry name" value="5'-nuclease"/>
    <property type="match status" value="1"/>
</dbReference>
<dbReference type="HAMAP" id="MF_00614">
    <property type="entry name" value="Fen"/>
    <property type="match status" value="1"/>
</dbReference>
<dbReference type="InterPro" id="IPR002421">
    <property type="entry name" value="5-3_exonuclease"/>
</dbReference>
<dbReference type="InterPro" id="IPR036279">
    <property type="entry name" value="5-3_exonuclease_C_sf"/>
</dbReference>
<dbReference type="InterPro" id="IPR023426">
    <property type="entry name" value="Flap_endonuc"/>
</dbReference>
<dbReference type="InterPro" id="IPR008918">
    <property type="entry name" value="HhH2"/>
</dbReference>
<dbReference type="InterPro" id="IPR029060">
    <property type="entry name" value="PIN-like_dom_sf"/>
</dbReference>
<dbReference type="InterPro" id="IPR006086">
    <property type="entry name" value="XPG-I_dom"/>
</dbReference>
<dbReference type="InterPro" id="IPR006084">
    <property type="entry name" value="XPG/Rad2"/>
</dbReference>
<dbReference type="InterPro" id="IPR019974">
    <property type="entry name" value="XPG_CS"/>
</dbReference>
<dbReference type="InterPro" id="IPR006085">
    <property type="entry name" value="XPG_DNA_repair_N"/>
</dbReference>
<dbReference type="PANTHER" id="PTHR11081:SF56">
    <property type="entry name" value="FLAP ENDONUCLEASE 1-B"/>
    <property type="match status" value="1"/>
</dbReference>
<dbReference type="PANTHER" id="PTHR11081">
    <property type="entry name" value="FLAP ENDONUCLEASE FAMILY MEMBER"/>
    <property type="match status" value="1"/>
</dbReference>
<dbReference type="Pfam" id="PF00867">
    <property type="entry name" value="XPG_I"/>
    <property type="match status" value="1"/>
</dbReference>
<dbReference type="Pfam" id="PF00752">
    <property type="entry name" value="XPG_N"/>
    <property type="match status" value="1"/>
</dbReference>
<dbReference type="PRINTS" id="PR00853">
    <property type="entry name" value="XPGRADSUPER"/>
</dbReference>
<dbReference type="SMART" id="SM00475">
    <property type="entry name" value="53EXOc"/>
    <property type="match status" value="1"/>
</dbReference>
<dbReference type="SMART" id="SM00279">
    <property type="entry name" value="HhH2"/>
    <property type="match status" value="1"/>
</dbReference>
<dbReference type="SMART" id="SM00484">
    <property type="entry name" value="XPGI"/>
    <property type="match status" value="1"/>
</dbReference>
<dbReference type="SMART" id="SM00485">
    <property type="entry name" value="XPGN"/>
    <property type="match status" value="1"/>
</dbReference>
<dbReference type="SUPFAM" id="SSF47807">
    <property type="entry name" value="5' to 3' exonuclease, C-terminal subdomain"/>
    <property type="match status" value="1"/>
</dbReference>
<dbReference type="SUPFAM" id="SSF88723">
    <property type="entry name" value="PIN domain-like"/>
    <property type="match status" value="1"/>
</dbReference>
<dbReference type="PROSITE" id="PS00841">
    <property type="entry name" value="XPG_1"/>
    <property type="match status" value="1"/>
</dbReference>
<dbReference type="PROSITE" id="PS00842">
    <property type="entry name" value="XPG_2"/>
    <property type="match status" value="1"/>
</dbReference>
<feature type="chain" id="PRO_0000154072" description="Flap endonuclease 1-B">
    <location>
        <begin position="1"/>
        <end position="412"/>
    </location>
</feature>
<feature type="region of interest" description="N-domain">
    <location>
        <begin position="1"/>
        <end position="105"/>
    </location>
</feature>
<feature type="region of interest" description="I-domain">
    <location>
        <begin position="123"/>
        <end position="254"/>
    </location>
</feature>
<feature type="binding site" evidence="1">
    <location>
        <position position="34"/>
    </location>
    <ligand>
        <name>Mg(2+)</name>
        <dbReference type="ChEBI" id="CHEBI:18420"/>
        <label>1</label>
    </ligand>
</feature>
<feature type="binding site" evidence="1">
    <location>
        <position position="71"/>
    </location>
    <ligand>
        <name>DNA</name>
        <dbReference type="ChEBI" id="CHEBI:16991"/>
    </ligand>
</feature>
<feature type="binding site" evidence="1">
    <location>
        <position position="87"/>
    </location>
    <ligand>
        <name>Mg(2+)</name>
        <dbReference type="ChEBI" id="CHEBI:18420"/>
        <label>1</label>
    </ligand>
</feature>
<feature type="binding site" evidence="1">
    <location>
        <position position="159"/>
    </location>
    <ligand>
        <name>DNA</name>
        <dbReference type="ChEBI" id="CHEBI:16991"/>
    </ligand>
</feature>
<feature type="binding site" evidence="1">
    <location>
        <position position="159"/>
    </location>
    <ligand>
        <name>Mg(2+)</name>
        <dbReference type="ChEBI" id="CHEBI:18420"/>
        <label>1</label>
    </ligand>
</feature>
<feature type="binding site" evidence="1">
    <location>
        <position position="161"/>
    </location>
    <ligand>
        <name>Mg(2+)</name>
        <dbReference type="ChEBI" id="CHEBI:18420"/>
        <label>1</label>
    </ligand>
</feature>
<feature type="binding site" evidence="1">
    <location>
        <position position="180"/>
    </location>
    <ligand>
        <name>Mg(2+)</name>
        <dbReference type="ChEBI" id="CHEBI:18420"/>
        <label>2</label>
    </ligand>
</feature>
<feature type="binding site" evidence="1">
    <location>
        <position position="182"/>
    </location>
    <ligand>
        <name>Mg(2+)</name>
        <dbReference type="ChEBI" id="CHEBI:18420"/>
        <label>2</label>
    </ligand>
</feature>
<feature type="binding site" evidence="1">
    <location>
        <position position="232"/>
    </location>
    <ligand>
        <name>DNA</name>
        <dbReference type="ChEBI" id="CHEBI:16991"/>
    </ligand>
</feature>
<feature type="binding site" evidence="1">
    <location>
        <position position="234"/>
    </location>
    <ligand>
        <name>DNA</name>
        <dbReference type="ChEBI" id="CHEBI:16991"/>
    </ligand>
</feature>
<feature type="binding site" evidence="1">
    <location>
        <position position="234"/>
    </location>
    <ligand>
        <name>Mg(2+)</name>
        <dbReference type="ChEBI" id="CHEBI:18420"/>
        <label>2</label>
    </ligand>
</feature>
<feature type="sequence conflict" description="In Ref. 1; BAC66965/BAC98428." evidence="3" ref="1">
    <original>T</original>
    <variation>A</variation>
    <location>
        <position position="35"/>
    </location>
</feature>
<keyword id="KW-0227">DNA damage</keyword>
<keyword id="KW-0234">DNA repair</keyword>
<keyword id="KW-0235">DNA replication</keyword>
<keyword id="KW-0255">Endonuclease</keyword>
<keyword id="KW-0269">Exonuclease</keyword>
<keyword id="KW-0378">Hydrolase</keyword>
<keyword id="KW-0460">Magnesium</keyword>
<keyword id="KW-0479">Metal-binding</keyword>
<keyword id="KW-0496">Mitochondrion</keyword>
<keyword id="KW-0540">Nuclease</keyword>
<keyword id="KW-0539">Nucleus</keyword>
<keyword id="KW-0597">Phosphoprotein</keyword>
<keyword id="KW-1185">Reference proteome</keyword>
<reference key="1">
    <citation type="journal article" date="2003" name="Gene">
        <title>Functional characterization of two flap endonuclease-1 homologues in rice.</title>
        <authorList>
            <person name="Kimura S."/>
            <person name="Furukawa T."/>
            <person name="Kasai N."/>
            <person name="Mori Y."/>
            <person name="Kitamoto H.K."/>
            <person name="Sugawara F."/>
            <person name="Hashimoto J."/>
            <person name="Sakaguchi K."/>
        </authorList>
    </citation>
    <scope>NUCLEOTIDE SEQUENCE [MRNA]</scope>
    <scope>FUNCTION</scope>
    <scope>TISSUE SPECIFICITY</scope>
    <source>
        <strain>cv. Nipponbare</strain>
    </source>
</reference>
<reference key="2">
    <citation type="journal article" date="2005" name="Genome Res.">
        <title>Sequence, annotation, and analysis of synteny between rice chromosome 3 and diverged grass species.</title>
        <authorList>
            <consortium name="The rice chromosome 3 sequencing consortium"/>
            <person name="Buell C.R."/>
            <person name="Yuan Q."/>
            <person name="Ouyang S."/>
            <person name="Liu J."/>
            <person name="Zhu W."/>
            <person name="Wang A."/>
            <person name="Maiti R."/>
            <person name="Haas B."/>
            <person name="Wortman J."/>
            <person name="Pertea M."/>
            <person name="Jones K.M."/>
            <person name="Kim M."/>
            <person name="Overton L."/>
            <person name="Tsitrin T."/>
            <person name="Fadrosh D."/>
            <person name="Bera J."/>
            <person name="Weaver B."/>
            <person name="Jin S."/>
            <person name="Johri S."/>
            <person name="Reardon M."/>
            <person name="Webb K."/>
            <person name="Hill J."/>
            <person name="Moffat K."/>
            <person name="Tallon L."/>
            <person name="Van Aken S."/>
            <person name="Lewis M."/>
            <person name="Utterback T."/>
            <person name="Feldblyum T."/>
            <person name="Zismann V."/>
            <person name="Iobst S."/>
            <person name="Hsiao J."/>
            <person name="de Vazeille A.R."/>
            <person name="Salzberg S.L."/>
            <person name="White O."/>
            <person name="Fraser C.M."/>
            <person name="Yu Y."/>
            <person name="Kim H."/>
            <person name="Rambo T."/>
            <person name="Currie J."/>
            <person name="Collura K."/>
            <person name="Kernodle-Thompson S."/>
            <person name="Wei F."/>
            <person name="Kudrna K."/>
            <person name="Ammiraju J.S.S."/>
            <person name="Luo M."/>
            <person name="Goicoechea J.L."/>
            <person name="Wing R.A."/>
            <person name="Henry D."/>
            <person name="Oates R."/>
            <person name="Palmer M."/>
            <person name="Pries G."/>
            <person name="Saski C."/>
            <person name="Simmons J."/>
            <person name="Soderlund C."/>
            <person name="Nelson W."/>
            <person name="de la Bastide M."/>
            <person name="Spiegel L."/>
            <person name="Nascimento L."/>
            <person name="Huang E."/>
            <person name="Preston R."/>
            <person name="Zutavern T."/>
            <person name="Palmer L."/>
            <person name="O'Shaughnessy A."/>
            <person name="Dike S."/>
            <person name="McCombie W.R."/>
            <person name="Minx P."/>
            <person name="Cordum H."/>
            <person name="Wilson R."/>
            <person name="Jin W."/>
            <person name="Lee H.R."/>
            <person name="Jiang J."/>
            <person name="Jackson S."/>
        </authorList>
    </citation>
    <scope>NUCLEOTIDE SEQUENCE [LARGE SCALE GENOMIC DNA]</scope>
    <source>
        <strain>cv. Nipponbare</strain>
    </source>
</reference>
<reference key="3">
    <citation type="journal article" date="2005" name="Nature">
        <title>The map-based sequence of the rice genome.</title>
        <authorList>
            <consortium name="International rice genome sequencing project (IRGSP)"/>
        </authorList>
    </citation>
    <scope>NUCLEOTIDE SEQUENCE [LARGE SCALE GENOMIC DNA]</scope>
    <source>
        <strain>cv. Nipponbare</strain>
    </source>
</reference>
<reference key="4">
    <citation type="journal article" date="2008" name="Nucleic Acids Res.">
        <title>The rice annotation project database (RAP-DB): 2008 update.</title>
        <authorList>
            <consortium name="The rice annotation project (RAP)"/>
        </authorList>
    </citation>
    <scope>GENOME REANNOTATION</scope>
    <source>
        <strain>cv. Nipponbare</strain>
    </source>
</reference>
<reference key="5">
    <citation type="journal article" date="2013" name="Rice">
        <title>Improvement of the Oryza sativa Nipponbare reference genome using next generation sequence and optical map data.</title>
        <authorList>
            <person name="Kawahara Y."/>
            <person name="de la Bastide M."/>
            <person name="Hamilton J.P."/>
            <person name="Kanamori H."/>
            <person name="McCombie W.R."/>
            <person name="Ouyang S."/>
            <person name="Schwartz D.C."/>
            <person name="Tanaka T."/>
            <person name="Wu J."/>
            <person name="Zhou S."/>
            <person name="Childs K.L."/>
            <person name="Davidson R.M."/>
            <person name="Lin H."/>
            <person name="Quesada-Ocampo L."/>
            <person name="Vaillancourt B."/>
            <person name="Sakai H."/>
            <person name="Lee S.S."/>
            <person name="Kim J."/>
            <person name="Numa H."/>
            <person name="Itoh T."/>
            <person name="Buell C.R."/>
            <person name="Matsumoto T."/>
        </authorList>
    </citation>
    <scope>GENOME REANNOTATION</scope>
    <source>
        <strain>cv. Nipponbare</strain>
    </source>
</reference>
<reference key="6">
    <citation type="journal article" date="2005" name="PLoS Biol.">
        <title>The genomes of Oryza sativa: a history of duplications.</title>
        <authorList>
            <person name="Yu J."/>
            <person name="Wang J."/>
            <person name="Lin W."/>
            <person name="Li S."/>
            <person name="Li H."/>
            <person name="Zhou J."/>
            <person name="Ni P."/>
            <person name="Dong W."/>
            <person name="Hu S."/>
            <person name="Zeng C."/>
            <person name="Zhang J."/>
            <person name="Zhang Y."/>
            <person name="Li R."/>
            <person name="Xu Z."/>
            <person name="Li S."/>
            <person name="Li X."/>
            <person name="Zheng H."/>
            <person name="Cong L."/>
            <person name="Lin L."/>
            <person name="Yin J."/>
            <person name="Geng J."/>
            <person name="Li G."/>
            <person name="Shi J."/>
            <person name="Liu J."/>
            <person name="Lv H."/>
            <person name="Li J."/>
            <person name="Wang J."/>
            <person name="Deng Y."/>
            <person name="Ran L."/>
            <person name="Shi X."/>
            <person name="Wang X."/>
            <person name="Wu Q."/>
            <person name="Li C."/>
            <person name="Ren X."/>
            <person name="Wang J."/>
            <person name="Wang X."/>
            <person name="Li D."/>
            <person name="Liu D."/>
            <person name="Zhang X."/>
            <person name="Ji Z."/>
            <person name="Zhao W."/>
            <person name="Sun Y."/>
            <person name="Zhang Z."/>
            <person name="Bao J."/>
            <person name="Han Y."/>
            <person name="Dong L."/>
            <person name="Ji J."/>
            <person name="Chen P."/>
            <person name="Wu S."/>
            <person name="Liu J."/>
            <person name="Xiao Y."/>
            <person name="Bu D."/>
            <person name="Tan J."/>
            <person name="Yang L."/>
            <person name="Ye C."/>
            <person name="Zhang J."/>
            <person name="Xu J."/>
            <person name="Zhou Y."/>
            <person name="Yu Y."/>
            <person name="Zhang B."/>
            <person name="Zhuang S."/>
            <person name="Wei H."/>
            <person name="Liu B."/>
            <person name="Lei M."/>
            <person name="Yu H."/>
            <person name="Li Y."/>
            <person name="Xu H."/>
            <person name="Wei S."/>
            <person name="He X."/>
            <person name="Fang L."/>
            <person name="Zhang Z."/>
            <person name="Zhang Y."/>
            <person name="Huang X."/>
            <person name="Su Z."/>
            <person name="Tong W."/>
            <person name="Li J."/>
            <person name="Tong Z."/>
            <person name="Li S."/>
            <person name="Ye J."/>
            <person name="Wang L."/>
            <person name="Fang L."/>
            <person name="Lei T."/>
            <person name="Chen C.-S."/>
            <person name="Chen H.-C."/>
            <person name="Xu Z."/>
            <person name="Li H."/>
            <person name="Huang H."/>
            <person name="Zhang F."/>
            <person name="Xu H."/>
            <person name="Li N."/>
            <person name="Zhao C."/>
            <person name="Li S."/>
            <person name="Dong L."/>
            <person name="Huang Y."/>
            <person name="Li L."/>
            <person name="Xi Y."/>
            <person name="Qi Q."/>
            <person name="Li W."/>
            <person name="Zhang B."/>
            <person name="Hu W."/>
            <person name="Zhang Y."/>
            <person name="Tian X."/>
            <person name="Jiao Y."/>
            <person name="Liang X."/>
            <person name="Jin J."/>
            <person name="Gao L."/>
            <person name="Zheng W."/>
            <person name="Hao B."/>
            <person name="Liu S.-M."/>
            <person name="Wang W."/>
            <person name="Yuan L."/>
            <person name="Cao M."/>
            <person name="McDermott J."/>
            <person name="Samudrala R."/>
            <person name="Wang J."/>
            <person name="Wong G.K.-S."/>
            <person name="Yang H."/>
        </authorList>
    </citation>
    <scope>NUCLEOTIDE SEQUENCE [LARGE SCALE GENOMIC DNA]</scope>
    <source>
        <strain>cv. Nipponbare</strain>
    </source>
</reference>
<reference key="7">
    <citation type="journal article" date="2003" name="Science">
        <title>Collection, mapping, and annotation of over 28,000 cDNA clones from japonica rice.</title>
        <authorList>
            <consortium name="The rice full-length cDNA consortium"/>
        </authorList>
    </citation>
    <scope>NUCLEOTIDE SEQUENCE [LARGE SCALE MRNA]</scope>
    <source>
        <strain>cv. Nipponbare</strain>
    </source>
</reference>
<organism>
    <name type="scientific">Oryza sativa subsp. japonica</name>
    <name type="common">Rice</name>
    <dbReference type="NCBI Taxonomy" id="39947"/>
    <lineage>
        <taxon>Eukaryota</taxon>
        <taxon>Viridiplantae</taxon>
        <taxon>Streptophyta</taxon>
        <taxon>Embryophyta</taxon>
        <taxon>Tracheophyta</taxon>
        <taxon>Spermatophyta</taxon>
        <taxon>Magnoliopsida</taxon>
        <taxon>Liliopsida</taxon>
        <taxon>Poales</taxon>
        <taxon>Poaceae</taxon>
        <taxon>BOP clade</taxon>
        <taxon>Oryzoideae</taxon>
        <taxon>Oryzeae</taxon>
        <taxon>Oryzinae</taxon>
        <taxon>Oryza</taxon>
        <taxon>Oryza sativa</taxon>
    </lineage>
</organism>
<name>FEN12_ORYSJ</name>
<sequence>MGIKGLTKLLAEHAPGAAVRRRVEDYRGRVVAIDTSLSIYQFLIVVGRKGTEVLTNEAGEVTSHLQGMLNRTVRILEAGIKPVFVFDGEPPDMKKKELAKRSLKRDGSSEDLNRAIEVGDEDLIEKFSKRTVKVTKKHNEDCKRLLSLMGVPVVQAPGEAEAQCAALCENHKVFAIASEDMDSLTFGARRFLRHLTDLSFKRSPVTEFEVSKVLEELGLTMDQFIDLCILSGCDYCENIRGIGGQRALKLIRQHGYIEEVVQNLSQTRYSVPEDWPYQEVRALFKEPNVCTDIPDFLWTPPDEEGLINFLAAENNFSPDRVVKSVEKIKAANDKFSLGRGKLLAPVANLTGSTSTAGKEPKCILGGPGQVMKARSPLQVCKSSSLNFIHDNSKAFMLGRRSGFLRISTYASI</sequence>
<protein>
    <recommendedName>
        <fullName evidence="1">Flap endonuclease 1-B</fullName>
        <shortName evidence="1">FEN-1-B</shortName>
        <ecNumber evidence="1">3.1.-.-</ecNumber>
    </recommendedName>
    <alternativeName>
        <fullName evidence="1">Flap structure-specific endonuclease 1-B</fullName>
    </alternativeName>
    <alternativeName>
        <fullName>OsFEN-1b</fullName>
    </alternativeName>
</protein>